<sequence>MKRPFAVSVTYPTRESAEESSCELVRRRLAACCQISEITSIYFWKEAIVKETEYKLIAKTFSSLFAGIQEFVAGSHPYEVPEITGMEMHLASRQYLEWMNSCVDDTGQAPNTRQ</sequence>
<dbReference type="EMBL" id="AL590444">
    <property type="protein sequence ID" value="CAD25325.1"/>
    <property type="molecule type" value="Genomic_DNA"/>
</dbReference>
<dbReference type="RefSeq" id="NP_584821.1">
    <property type="nucleotide sequence ID" value="NM_001041171.1"/>
</dbReference>
<dbReference type="SMR" id="Q8SVR6"/>
<dbReference type="STRING" id="284813.Q8SVR6"/>
<dbReference type="GeneID" id="858969"/>
<dbReference type="KEGG" id="ecu:ECU04_1360"/>
<dbReference type="VEuPathDB" id="MicrosporidiaDB:ECU04_1360"/>
<dbReference type="HOGENOM" id="CLU_098807_2_0_1"/>
<dbReference type="InParanoid" id="Q8SVR6"/>
<dbReference type="OMA" id="MEMHLAS"/>
<dbReference type="OrthoDB" id="2017693at2759"/>
<dbReference type="Proteomes" id="UP000000819">
    <property type="component" value="Chromosome IV"/>
</dbReference>
<dbReference type="GO" id="GO:0005507">
    <property type="term" value="F:copper ion binding"/>
    <property type="evidence" value="ECO:0007669"/>
    <property type="project" value="TreeGrafter"/>
</dbReference>
<dbReference type="GO" id="GO:0010038">
    <property type="term" value="P:response to metal ion"/>
    <property type="evidence" value="ECO:0007669"/>
    <property type="project" value="InterPro"/>
</dbReference>
<dbReference type="Gene3D" id="3.30.70.120">
    <property type="match status" value="1"/>
</dbReference>
<dbReference type="InterPro" id="IPR004323">
    <property type="entry name" value="Ion_tolerance_CutA"/>
</dbReference>
<dbReference type="InterPro" id="IPR011322">
    <property type="entry name" value="N-reg_PII-like_a/b"/>
</dbReference>
<dbReference type="InterPro" id="IPR015867">
    <property type="entry name" value="N-reg_PII/ATP_PRibTrfase_C"/>
</dbReference>
<dbReference type="PANTHER" id="PTHR23419">
    <property type="entry name" value="DIVALENT CATION TOLERANCE CUTA-RELATED"/>
    <property type="match status" value="1"/>
</dbReference>
<dbReference type="PANTHER" id="PTHR23419:SF8">
    <property type="entry name" value="FI09726P"/>
    <property type="match status" value="1"/>
</dbReference>
<dbReference type="Pfam" id="PF03091">
    <property type="entry name" value="CutA1"/>
    <property type="match status" value="1"/>
</dbReference>
<dbReference type="SUPFAM" id="SSF54913">
    <property type="entry name" value="GlnB-like"/>
    <property type="match status" value="1"/>
</dbReference>
<comment type="subunit">
    <text evidence="1">Homotrimer.</text>
</comment>
<comment type="similarity">
    <text evidence="2">Belongs to the CutA family.</text>
</comment>
<evidence type="ECO:0000250" key="1"/>
<evidence type="ECO:0000305" key="2"/>
<organism>
    <name type="scientific">Encephalitozoon cuniculi (strain GB-M1)</name>
    <name type="common">Microsporidian parasite</name>
    <dbReference type="NCBI Taxonomy" id="284813"/>
    <lineage>
        <taxon>Eukaryota</taxon>
        <taxon>Fungi</taxon>
        <taxon>Fungi incertae sedis</taxon>
        <taxon>Microsporidia</taxon>
        <taxon>Unikaryonidae</taxon>
        <taxon>Encephalitozoon</taxon>
    </lineage>
</organism>
<protein>
    <recommendedName>
        <fullName>Probable divalent-cation tolerance protein cutA homolog</fullName>
    </recommendedName>
</protein>
<reference key="1">
    <citation type="journal article" date="2001" name="Nature">
        <title>Genome sequence and gene compaction of the eukaryote parasite Encephalitozoon cuniculi.</title>
        <authorList>
            <person name="Katinka M.D."/>
            <person name="Duprat S."/>
            <person name="Cornillot E."/>
            <person name="Metenier G."/>
            <person name="Thomarat F."/>
            <person name="Prensier G."/>
            <person name="Barbe V."/>
            <person name="Peyretaillade E."/>
            <person name="Brottier P."/>
            <person name="Wincker P."/>
            <person name="Delbac F."/>
            <person name="El Alaoui H."/>
            <person name="Peyret P."/>
            <person name="Saurin W."/>
            <person name="Gouy M."/>
            <person name="Weissenbach J."/>
            <person name="Vivares C.P."/>
        </authorList>
    </citation>
    <scope>NUCLEOTIDE SEQUENCE [LARGE SCALE GENOMIC DNA]</scope>
    <source>
        <strain>GB-M1</strain>
    </source>
</reference>
<keyword id="KW-1185">Reference proteome</keyword>
<gene>
    <name type="ordered locus">ECU04_1360</name>
</gene>
<name>CUTA_ENCCU</name>
<accession>Q8SVR6</accession>
<proteinExistence type="inferred from homology"/>
<feature type="chain" id="PRO_0000388431" description="Probable divalent-cation tolerance protein cutA homolog">
    <location>
        <begin position="1"/>
        <end position="114"/>
    </location>
</feature>